<proteinExistence type="evidence at transcript level"/>
<organism>
    <name type="scientific">Curvularia clavata</name>
    <dbReference type="NCBI Taxonomy" id="95742"/>
    <lineage>
        <taxon>Eukaryota</taxon>
        <taxon>Fungi</taxon>
        <taxon>Dikarya</taxon>
        <taxon>Ascomycota</taxon>
        <taxon>Pezizomycotina</taxon>
        <taxon>Dothideomycetes</taxon>
        <taxon>Pleosporomycetidae</taxon>
        <taxon>Pleosporales</taxon>
        <taxon>Pleosporineae</taxon>
        <taxon>Pleosporaceae</taxon>
        <taxon>Curvularia</taxon>
    </lineage>
</organism>
<dbReference type="EC" id="1.5.1.-" evidence="8"/>
<dbReference type="EMBL" id="LC371755">
    <property type="protein sequence ID" value="BBC83964.1"/>
    <property type="molecule type" value="Genomic_DNA"/>
</dbReference>
<dbReference type="SMR" id="A0A348AXY1"/>
<dbReference type="GlyCosmos" id="A0A348AXY1">
    <property type="glycosylation" value="1 site, No reported glycans"/>
</dbReference>
<dbReference type="VEuPathDB" id="FungiDB:yc1106_06625"/>
<dbReference type="GO" id="GO:0004735">
    <property type="term" value="F:pyrroline-5-carboxylate reductase activity"/>
    <property type="evidence" value="ECO:0007669"/>
    <property type="project" value="InterPro"/>
</dbReference>
<dbReference type="GO" id="GO:0017000">
    <property type="term" value="P:antibiotic biosynthetic process"/>
    <property type="evidence" value="ECO:0007669"/>
    <property type="project" value="UniProtKB-KW"/>
</dbReference>
<dbReference type="GO" id="GO:0055129">
    <property type="term" value="P:L-proline biosynthetic process"/>
    <property type="evidence" value="ECO:0007669"/>
    <property type="project" value="TreeGrafter"/>
</dbReference>
<dbReference type="FunFam" id="1.10.3730.10:FF:000001">
    <property type="entry name" value="Pyrroline-5-carboxylate reductase"/>
    <property type="match status" value="1"/>
</dbReference>
<dbReference type="Gene3D" id="3.40.50.720">
    <property type="entry name" value="NAD(P)-binding Rossmann-like Domain"/>
    <property type="match status" value="1"/>
</dbReference>
<dbReference type="Gene3D" id="1.10.3730.10">
    <property type="entry name" value="ProC C-terminal domain-like"/>
    <property type="match status" value="1"/>
</dbReference>
<dbReference type="HAMAP" id="MF_01925">
    <property type="entry name" value="P5C_reductase"/>
    <property type="match status" value="1"/>
</dbReference>
<dbReference type="InterPro" id="IPR008927">
    <property type="entry name" value="6-PGluconate_DH-like_C_sf"/>
</dbReference>
<dbReference type="InterPro" id="IPR036291">
    <property type="entry name" value="NAD(P)-bd_dom_sf"/>
</dbReference>
<dbReference type="InterPro" id="IPR028939">
    <property type="entry name" value="P5C_Rdtase_cat_N"/>
</dbReference>
<dbReference type="InterPro" id="IPR053790">
    <property type="entry name" value="P5CR-like_CS"/>
</dbReference>
<dbReference type="InterPro" id="IPR029036">
    <property type="entry name" value="P5CR_dimer"/>
</dbReference>
<dbReference type="InterPro" id="IPR000304">
    <property type="entry name" value="Pyrroline-COOH_reductase"/>
</dbReference>
<dbReference type="NCBIfam" id="TIGR00112">
    <property type="entry name" value="proC"/>
    <property type="match status" value="1"/>
</dbReference>
<dbReference type="PANTHER" id="PTHR11645">
    <property type="entry name" value="PYRROLINE-5-CARBOXYLATE REDUCTASE"/>
    <property type="match status" value="1"/>
</dbReference>
<dbReference type="PANTHER" id="PTHR11645:SF0">
    <property type="entry name" value="PYRROLINE-5-CARBOXYLATE REDUCTASE 3"/>
    <property type="match status" value="1"/>
</dbReference>
<dbReference type="Pfam" id="PF03807">
    <property type="entry name" value="F420_oxidored"/>
    <property type="match status" value="1"/>
</dbReference>
<dbReference type="Pfam" id="PF14748">
    <property type="entry name" value="P5CR_dimer"/>
    <property type="match status" value="1"/>
</dbReference>
<dbReference type="PIRSF" id="PIRSF000193">
    <property type="entry name" value="Pyrrol-5-carb_rd"/>
    <property type="match status" value="1"/>
</dbReference>
<dbReference type="SUPFAM" id="SSF48179">
    <property type="entry name" value="6-phosphogluconate dehydrogenase C-terminal domain-like"/>
    <property type="match status" value="1"/>
</dbReference>
<dbReference type="SUPFAM" id="SSF51735">
    <property type="entry name" value="NAD(P)-binding Rossmann-fold domains"/>
    <property type="match status" value="1"/>
</dbReference>
<dbReference type="PROSITE" id="PS00521">
    <property type="entry name" value="P5CR"/>
    <property type="match status" value="1"/>
</dbReference>
<name>KK1I_CURCL</name>
<evidence type="ECO:0000255" key="1"/>
<evidence type="ECO:0000255" key="2">
    <source>
        <dbReference type="PROSITE-ProRule" id="PRU00498"/>
    </source>
</evidence>
<evidence type="ECO:0000269" key="3">
    <source>
    </source>
</evidence>
<evidence type="ECO:0000269" key="4">
    <source>
    </source>
</evidence>
<evidence type="ECO:0000303" key="5">
    <source>
    </source>
</evidence>
<evidence type="ECO:0000303" key="6">
    <source>
    </source>
</evidence>
<evidence type="ECO:0000305" key="7"/>
<evidence type="ECO:0000305" key="8">
    <source>
    </source>
</evidence>
<reference key="1">
    <citation type="journal article" date="2018" name="Front. Microbiol.">
        <title>Heterologous production of a novel cyclic peptide compound, KK-1, in Aspergillus oryzae.</title>
        <authorList>
            <person name="Yoshimi A."/>
            <person name="Yamaguchi S."/>
            <person name="Fujioka T."/>
            <person name="Kawai K."/>
            <person name="Gomi K."/>
            <person name="Machida M."/>
            <person name="Abe K."/>
        </authorList>
    </citation>
    <scope>NUCLEOTIDE SEQUENCE [GENOMIC DNA]</scope>
    <scope>FUNCTION</scope>
    <scope>PATHWAY</scope>
    <source>
        <strain>BAUA-2787</strain>
    </source>
</reference>
<reference key="2">
    <citation type="journal article" date="2022" name="Front. Fungal Biol.">
        <title>Discovery of a gene cluster for the biosynthesis of novel cyclic peptide compound, KK-1, in Curvularia clavata.</title>
        <authorList>
            <person name="Yamaguchi S."/>
            <person name="Fujioka T."/>
            <person name="Yoshimi A."/>
            <person name="Kumagai T."/>
            <person name="Umemura M."/>
            <person name="Abe K."/>
            <person name="Machida M."/>
            <person name="Kawai K."/>
        </authorList>
    </citation>
    <scope>FUNCTION</scope>
    <scope>INDUCTION</scope>
    <scope>DISRUPTION PHENOTYPE</scope>
    <scope>PATHWAY</scope>
</reference>
<protein>
    <recommendedName>
        <fullName evidence="6">Delta-1-pyrroline-5-carboxylate reductase kk1I</fullName>
        <ecNumber evidence="8">1.5.1.-</ecNumber>
    </recommendedName>
    <alternativeName>
        <fullName evidence="6">KK-1 biosynthesis cluster protein I</fullName>
    </alternativeName>
</protein>
<comment type="function">
    <text evidence="3 4 8">Delta-1-pyrroline-5-carboxylate reductase; part of the gene cluster that mediates the biosynthesis of KK-1, a novel cyclic depsipeptide with 10 residues which is a promising active compound with high activity against many plant pathogens, especially Botrytis cinerea (PubMed:29686660, PubMed:37746209). Within the pathway, kk1I catalyzes the synthesis of the L-pipecolic acid residue of KK-1 from delta-1-pyrroline-5-carboxylate (P5C), a metabolic intermediate of lysine (Probable). The nonribosomal peptide synthetase (NRPS) kk1B catalyzes the elongation and cyclization of the decapeptide chain composed of 1 D-lactic acid residue (D-Lac), 1 pipecolic acid residue (Pip), 1 aspartic acid residue (Asp), 1 isoleucine residue (Ile), 1 glycine residue (Gly), 1 tyrosine residue (Tyr) and 4 valine residues (Val). The Asp, Ile and 3 Val residues are N-methylated by the 5 methyltransferase domains from the NRPS (found in modules 3, 5, 6, 7 and 9), whereas the Tyr residue is O-methylated by the cluster encoded O-methyltransferase kk1A. The thioesterase kk1J is likely to be involved in the corrective mechanism of peptide chain synthesis. The D-lactate dehydrogenase kk1H is involved in the synthesis of D-lactic acid from pyruvic acid, which is recognized by the A domain of the first kk1B module. The pyrroline-5-carboxylate reductase kk1I is involved in the synthesis of the L-pipecolic acid residue of KK-1 from delta-1-pyrroline-5-carboxylate (P5C), a metabolic intermediate of lysine. It still is unclear how kk1C and kk1D are involved in the production of KK-1 (Probable).</text>
</comment>
<comment type="pathway">
    <text evidence="3 4">Secondary metabolite biosynthesis.</text>
</comment>
<comment type="induction">
    <text evidence="4">Expression is positively regulated by the KK-1 cluster-specific transcription factor kk1F.</text>
</comment>
<comment type="disruption phenotype">
    <text evidence="4">Abolishes completely the production of KK-1.</text>
</comment>
<comment type="similarity">
    <text evidence="7">Belongs to the pyrroline-5-carboxylate reductase family.</text>
</comment>
<gene>
    <name evidence="6" type="primary">kk1I</name>
    <name evidence="5" type="synonym">TR08</name>
    <name type="ORF">TRAF135008</name>
</gene>
<accession>A0A348AXY1</accession>
<sequence length="311" mass="32897">MTKRESNTLAVLGCGMVFLVSLLDLANRLLGALGTAILSGILASMADQTADDSGRLFTNFTACVRRKETGAAVSDKISSHANANKVEILNKENLRGVKQADAVLLACQTHLYKALFDEPGMREALKKKLIISVLAGVTTAQLEAALGNGEDYFVIRAMPNIACFVRDSATVIEKPQRTFPEALLHVTDTVFKAVGNVFYIQPSAYDICTALCGSSPAFLAVFIDSMVDGAVAMGLSHKDAVDMAACTMRGAASLVLESGNPWTIRHQVASPGGSTMQGLLALEQGNVRSTISNALMVAAKEAKKLGSKENA</sequence>
<feature type="signal peptide" evidence="1">
    <location>
        <begin position="1"/>
        <end position="31"/>
    </location>
</feature>
<feature type="chain" id="PRO_0000450437" description="Delta-1-pyrroline-5-carboxylate reductase kk1I" evidence="1">
    <location>
        <begin position="32"/>
        <end position="311"/>
    </location>
</feature>
<feature type="glycosylation site" description="N-linked (GlcNAc...) asparagine" evidence="2">
    <location>
        <position position="59"/>
    </location>
</feature>
<keyword id="KW-0045">Antibiotic biosynthesis</keyword>
<keyword id="KW-0325">Glycoprotein</keyword>
<keyword id="KW-0521">NADP</keyword>
<keyword id="KW-0560">Oxidoreductase</keyword>
<keyword id="KW-0732">Signal</keyword>